<keyword id="KW-0153">Cholesterol metabolism</keyword>
<keyword id="KW-1015">Disulfide bond</keyword>
<keyword id="KW-0325">Glycoprotein</keyword>
<keyword id="KW-0326">Glycosidase</keyword>
<keyword id="KW-0328">Glycosyltransferase</keyword>
<keyword id="KW-0378">Hydrolase</keyword>
<keyword id="KW-0443">Lipid metabolism</keyword>
<keyword id="KW-0458">Lysosome</keyword>
<keyword id="KW-0472">Membrane</keyword>
<keyword id="KW-1185">Reference proteome</keyword>
<keyword id="KW-0732">Signal</keyword>
<keyword id="KW-0746">Sphingolipid metabolism</keyword>
<keyword id="KW-0753">Steroid metabolism</keyword>
<keyword id="KW-1207">Sterol metabolism</keyword>
<keyword id="KW-0808">Transferase</keyword>
<name>GBA1_PONAB</name>
<feature type="signal peptide" evidence="1">
    <location>
        <begin position="1"/>
        <end position="39"/>
    </location>
</feature>
<feature type="chain" id="PRO_0000278649" description="Lysosomal acid glucosylceramidase">
    <location>
        <begin position="40"/>
        <end position="536"/>
    </location>
</feature>
<feature type="active site" description="Proton donor" evidence="1">
    <location>
        <position position="274"/>
    </location>
</feature>
<feature type="active site" description="Nucleophile" evidence="1">
    <location>
        <position position="379"/>
    </location>
</feature>
<feature type="glycosylation site" description="N-linked (GlcNAc...) asparagine" evidence="3">
    <location>
        <position position="58"/>
    </location>
</feature>
<feature type="glycosylation site" description="N-linked (GlcNAc...) asparagine" evidence="3">
    <location>
        <position position="98"/>
    </location>
</feature>
<feature type="glycosylation site" description="N-linked (GlcNAc...) asparagine" evidence="3">
    <location>
        <position position="185"/>
    </location>
</feature>
<feature type="glycosylation site" description="N-linked (GlcNAc...) asparagine" evidence="3">
    <location>
        <position position="309"/>
    </location>
</feature>
<feature type="glycosylation site" description="N-linked (GlcNAc...) asparagine" evidence="3">
    <location>
        <position position="501"/>
    </location>
</feature>
<feature type="disulfide bond" evidence="2">
    <location>
        <begin position="43"/>
        <end position="55"/>
    </location>
</feature>
<feature type="disulfide bond" evidence="2">
    <location>
        <begin position="57"/>
        <end position="62"/>
    </location>
</feature>
<feature type="sequence conflict" description="In Ref. 1; CAH90774." evidence="4" ref="1">
    <original>Y</original>
    <variation>C</variation>
    <location>
        <position position="61"/>
    </location>
</feature>
<feature type="sequence conflict" description="In Ref. 1; CAH90774." evidence="4" ref="1">
    <original>R</original>
    <variation>H</variation>
    <location>
        <position position="316"/>
    </location>
</feature>
<feature type="sequence conflict" description="In Ref. 1; CAH90774." evidence="4" ref="1">
    <original>S</original>
    <variation>G</variation>
    <location>
        <position position="478"/>
    </location>
</feature>
<feature type="sequence conflict" description="In Ref. 1; CAH90774." evidence="4" ref="1">
    <original>R</original>
    <variation>C</variation>
    <location>
        <position position="534"/>
    </location>
</feature>
<evidence type="ECO:0000250" key="1"/>
<evidence type="ECO:0000250" key="2">
    <source>
        <dbReference type="UniProtKB" id="P04062"/>
    </source>
</evidence>
<evidence type="ECO:0000255" key="3"/>
<evidence type="ECO:0000305" key="4"/>
<gene>
    <name type="primary">GBA1</name>
    <name evidence="2" type="synonym">GBA</name>
</gene>
<proteinExistence type="evidence at transcript level"/>
<accession>Q5R8E3</accession>
<accession>Q5RBT6</accession>
<dbReference type="EC" id="3.2.1.45" evidence="2"/>
<dbReference type="EC" id="2.4.1.-" evidence="2"/>
<dbReference type="EC" id="3.2.1.-" evidence="2"/>
<dbReference type="EC" id="3.2.1.46" evidence="2"/>
<dbReference type="EMBL" id="CR858547">
    <property type="protein sequence ID" value="CAH90774.1"/>
    <property type="molecule type" value="mRNA"/>
</dbReference>
<dbReference type="EMBL" id="CR859809">
    <property type="protein sequence ID" value="CAH91967.1"/>
    <property type="molecule type" value="mRNA"/>
</dbReference>
<dbReference type="RefSeq" id="NP_001127488.1">
    <property type="nucleotide sequence ID" value="NM_001134016.2"/>
</dbReference>
<dbReference type="RefSeq" id="NP_001128784.2">
    <property type="nucleotide sequence ID" value="NM_001135312.2"/>
</dbReference>
<dbReference type="SMR" id="Q5R8E3"/>
<dbReference type="FunCoup" id="Q5R8E3">
    <property type="interactions" value="509"/>
</dbReference>
<dbReference type="STRING" id="9601.ENSPPYP00000000872"/>
<dbReference type="CAZy" id="GH30">
    <property type="family name" value="Glycoside Hydrolase Family 30"/>
</dbReference>
<dbReference type="GlyCosmos" id="Q5R8E3">
    <property type="glycosylation" value="5 sites, No reported glycans"/>
</dbReference>
<dbReference type="Ensembl" id="ENSPPYT00000000903.3">
    <property type="protein sequence ID" value="ENSPPYP00000000872.3"/>
    <property type="gene ID" value="ENSPPYG00000000751.3"/>
</dbReference>
<dbReference type="GeneID" id="100174563"/>
<dbReference type="KEGG" id="pon:100174563"/>
<dbReference type="CTD" id="2629"/>
<dbReference type="eggNOG" id="KOG2566">
    <property type="taxonomic scope" value="Eukaryota"/>
</dbReference>
<dbReference type="GeneTree" id="ENSGT00390000009464"/>
<dbReference type="HOGENOM" id="CLU_014379_1_2_1"/>
<dbReference type="InParanoid" id="Q5R8E3"/>
<dbReference type="OrthoDB" id="2160638at2759"/>
<dbReference type="UniPathway" id="UPA00296"/>
<dbReference type="Proteomes" id="UP000001595">
    <property type="component" value="Chromosome 1"/>
</dbReference>
<dbReference type="GO" id="GO:0005783">
    <property type="term" value="C:endoplasmic reticulum"/>
    <property type="evidence" value="ECO:0000250"/>
    <property type="project" value="UniProtKB"/>
</dbReference>
<dbReference type="GO" id="GO:0005794">
    <property type="term" value="C:Golgi apparatus"/>
    <property type="evidence" value="ECO:0000250"/>
    <property type="project" value="UniProtKB"/>
</dbReference>
<dbReference type="GO" id="GO:0005765">
    <property type="term" value="C:lysosomal membrane"/>
    <property type="evidence" value="ECO:0000250"/>
    <property type="project" value="UniProtKB"/>
</dbReference>
<dbReference type="GO" id="GO:0005764">
    <property type="term" value="C:lysosome"/>
    <property type="evidence" value="ECO:0000250"/>
    <property type="project" value="UniProtKB"/>
</dbReference>
<dbReference type="GO" id="GO:0005802">
    <property type="term" value="C:trans-Golgi network"/>
    <property type="evidence" value="ECO:0000250"/>
    <property type="project" value="UniProtKB"/>
</dbReference>
<dbReference type="GO" id="GO:0004336">
    <property type="term" value="F:galactosylceramidase activity"/>
    <property type="evidence" value="ECO:0007669"/>
    <property type="project" value="RHEA"/>
</dbReference>
<dbReference type="GO" id="GO:0004348">
    <property type="term" value="F:glucosylceramidase activity"/>
    <property type="evidence" value="ECO:0000250"/>
    <property type="project" value="UniProtKB"/>
</dbReference>
<dbReference type="GO" id="GO:0046527">
    <property type="term" value="F:glucosyltransferase activity"/>
    <property type="evidence" value="ECO:0000250"/>
    <property type="project" value="UniProtKB"/>
</dbReference>
<dbReference type="GO" id="GO:0050295">
    <property type="term" value="F:steryl-beta-glucosidase activity"/>
    <property type="evidence" value="ECO:0000250"/>
    <property type="project" value="UniProtKB"/>
</dbReference>
<dbReference type="GO" id="GO:0006914">
    <property type="term" value="P:autophagy"/>
    <property type="evidence" value="ECO:0000250"/>
    <property type="project" value="UniProtKB"/>
</dbReference>
<dbReference type="GO" id="GO:0008203">
    <property type="term" value="P:cholesterol metabolic process"/>
    <property type="evidence" value="ECO:0000250"/>
    <property type="project" value="UniProtKB"/>
</dbReference>
<dbReference type="GO" id="GO:0006680">
    <property type="term" value="P:glucosylceramide catabolic process"/>
    <property type="evidence" value="ECO:0000250"/>
    <property type="project" value="UniProtKB"/>
</dbReference>
<dbReference type="GO" id="GO:0030259">
    <property type="term" value="P:lipid glycosylation"/>
    <property type="evidence" value="ECO:0000250"/>
    <property type="project" value="UniProtKB"/>
</dbReference>
<dbReference type="GO" id="GO:0007040">
    <property type="term" value="P:lysosome organization"/>
    <property type="evidence" value="ECO:0000250"/>
    <property type="project" value="UniProtKB"/>
</dbReference>
<dbReference type="GO" id="GO:0032006">
    <property type="term" value="P:regulation of TOR signaling"/>
    <property type="evidence" value="ECO:0000250"/>
    <property type="project" value="UniProtKB"/>
</dbReference>
<dbReference type="FunFam" id="3.20.20.80:FF:000030">
    <property type="entry name" value="Lysosomal acid glucosylceramidase"/>
    <property type="match status" value="1"/>
</dbReference>
<dbReference type="Gene3D" id="3.20.20.80">
    <property type="entry name" value="Glycosidases"/>
    <property type="match status" value="1"/>
</dbReference>
<dbReference type="InterPro" id="IPR033452">
    <property type="entry name" value="GH30_C"/>
</dbReference>
<dbReference type="InterPro" id="IPR001139">
    <property type="entry name" value="Glyco_hydro_30"/>
</dbReference>
<dbReference type="InterPro" id="IPR033453">
    <property type="entry name" value="Glyco_hydro_30_TIM-barrel"/>
</dbReference>
<dbReference type="InterPro" id="IPR017853">
    <property type="entry name" value="Glycoside_hydrolase_SF"/>
</dbReference>
<dbReference type="PANTHER" id="PTHR11069">
    <property type="entry name" value="GLUCOSYLCERAMIDASE"/>
    <property type="match status" value="1"/>
</dbReference>
<dbReference type="PANTHER" id="PTHR11069:SF23">
    <property type="entry name" value="LYSOSOMAL ACID GLUCOSYLCERAMIDASE"/>
    <property type="match status" value="1"/>
</dbReference>
<dbReference type="Pfam" id="PF02055">
    <property type="entry name" value="Glyco_hydro_30"/>
    <property type="match status" value="1"/>
</dbReference>
<dbReference type="Pfam" id="PF17189">
    <property type="entry name" value="Glyco_hydro_30C"/>
    <property type="match status" value="1"/>
</dbReference>
<dbReference type="PRINTS" id="PR00843">
    <property type="entry name" value="GLHYDRLASE30"/>
</dbReference>
<dbReference type="SUPFAM" id="SSF51445">
    <property type="entry name" value="(Trans)glycosidases"/>
    <property type="match status" value="1"/>
</dbReference>
<dbReference type="SUPFAM" id="SSF51011">
    <property type="entry name" value="Glycosyl hydrolase domain"/>
    <property type="match status" value="2"/>
</dbReference>
<reference key="1">
    <citation type="submission" date="2004-11" db="EMBL/GenBank/DDBJ databases">
        <authorList>
            <consortium name="The German cDNA consortium"/>
        </authorList>
    </citation>
    <scope>NUCLEOTIDE SEQUENCE [LARGE SCALE MRNA]</scope>
    <source>
        <tissue>Kidney</tissue>
    </source>
</reference>
<protein>
    <recommendedName>
        <fullName evidence="4">Lysosomal acid glucosylceramidase</fullName>
        <ecNumber evidence="2">3.2.1.45</ecNumber>
    </recommendedName>
    <alternativeName>
        <fullName>Acid beta-glucosidase</fullName>
    </alternativeName>
    <alternativeName>
        <fullName>Beta-glucocerebrosidase</fullName>
    </alternativeName>
    <alternativeName>
        <fullName evidence="2">Cholesterol glucosyltransferase</fullName>
        <shortName evidence="2">SGTase</shortName>
        <ecNumber evidence="2">2.4.1.-</ecNumber>
    </alternativeName>
    <alternativeName>
        <fullName evidence="2">Cholesteryl-beta-glucosidase</fullName>
        <ecNumber evidence="2">3.2.1.-</ecNumber>
    </alternativeName>
    <alternativeName>
        <fullName>D-glucosyl-N-acylsphingosine glucohydrolase</fullName>
    </alternativeName>
    <alternativeName>
        <fullName evidence="4">Lysosomal cholesterol glycosyltransferase</fullName>
    </alternativeName>
    <alternativeName>
        <fullName evidence="4">Lysosomal galactosylceramidase</fullName>
        <ecNumber evidence="2">3.2.1.46</ecNumber>
    </alternativeName>
    <alternativeName>
        <fullName evidence="4">Lysosomal glycosylceramidase</fullName>
    </alternativeName>
</protein>
<organism>
    <name type="scientific">Pongo abelii</name>
    <name type="common">Sumatran orangutan</name>
    <name type="synonym">Pongo pygmaeus abelii</name>
    <dbReference type="NCBI Taxonomy" id="9601"/>
    <lineage>
        <taxon>Eukaryota</taxon>
        <taxon>Metazoa</taxon>
        <taxon>Chordata</taxon>
        <taxon>Craniata</taxon>
        <taxon>Vertebrata</taxon>
        <taxon>Euteleostomi</taxon>
        <taxon>Mammalia</taxon>
        <taxon>Eutheria</taxon>
        <taxon>Euarchontoglires</taxon>
        <taxon>Primates</taxon>
        <taxon>Haplorrhini</taxon>
        <taxon>Catarrhini</taxon>
        <taxon>Hominidae</taxon>
        <taxon>Pongo</taxon>
    </lineage>
</organism>
<comment type="function">
    <text evidence="2">Glucosylceramidase that catalyzes, within the lysosomal compartment, the hydrolysis of glucosylceramides/GlcCers (such as beta-D-glucosyl-(1&lt;-&gt;1')-N-acylsphing-4-enine) into free ceramides (such as N-acylsphing-4-enine) and glucose. Plays a central role in the degradation of complex lipids and the turnover of cellular membranes. Through the production of ceramides, participates in the PKC-activated salvage pathway of ceramide formation. Catalyzes the glucosylation of cholesterol, through a transglucosylation reaction where glucose is transferred from GlcCer to cholesterol. GlcCer containing mono-unsaturated fatty acids (such as beta-D-glucosyl-N-(9Z-octadecenoyl)-sphing-4-enine) are preferred as glucose donors for cholesterol glucosylation when compared with GlcCer containing same chain length of saturated fatty acids (such as beta-D-glucosyl-N-octadecanoyl-sphing-4-enine). Under specific conditions, may alternatively catalyze the reverse reaction, transferring glucose from cholesteryl 3-beta-D-glucoside to ceramide. Can also hydrolyze cholesteryl 3-beta-D-glucoside producing glucose and cholesterol. Catalyzes the hydrolysis of galactosylceramides/GalCers (such as beta-D-galactosyl-(1&lt;-&gt;1')-N-acylsphing-4-enine), as well as the transfer of galactose between GalCers and cholesterol in vitro, but with lower activity than with GlcCers. Contrary to GlcCer and GalCer, xylosylceramide/XylCer (such as beta-D-xyosyl-(1&lt;-&gt;1')-N-acylsphing-4-enine) is not a good substrate for hydrolysis, however it is a good xylose donor for transxylosylation activity to form cholesteryl 3-beta-D-xyloside.</text>
</comment>
<comment type="catalytic activity">
    <reaction evidence="2">
        <text>a beta-D-glucosyl-(1&lt;-&gt;1')-N-acylsphing-4-enine + H2O = an N-acylsphing-4-enine + D-glucose</text>
        <dbReference type="Rhea" id="RHEA:13269"/>
        <dbReference type="ChEBI" id="CHEBI:4167"/>
        <dbReference type="ChEBI" id="CHEBI:15377"/>
        <dbReference type="ChEBI" id="CHEBI:22801"/>
        <dbReference type="ChEBI" id="CHEBI:52639"/>
        <dbReference type="EC" id="3.2.1.45"/>
    </reaction>
    <physiologicalReaction direction="left-to-right" evidence="2">
        <dbReference type="Rhea" id="RHEA:13270"/>
    </physiologicalReaction>
</comment>
<comment type="catalytic activity">
    <reaction evidence="2">
        <text>a beta-D-galactosyl-(1&lt;-&gt;1')-N-acylsphing-4-enine + H2O = an N-acylsphing-4-enine + D-galactose</text>
        <dbReference type="Rhea" id="RHEA:14297"/>
        <dbReference type="ChEBI" id="CHEBI:4139"/>
        <dbReference type="ChEBI" id="CHEBI:15377"/>
        <dbReference type="ChEBI" id="CHEBI:18390"/>
        <dbReference type="ChEBI" id="CHEBI:52639"/>
        <dbReference type="EC" id="3.2.1.46"/>
    </reaction>
    <physiologicalReaction direction="left-to-right" evidence="2">
        <dbReference type="Rhea" id="RHEA:14298"/>
    </physiologicalReaction>
</comment>
<comment type="catalytic activity">
    <reaction evidence="2">
        <text>cholesteryl 3-beta-D-glucoside + H2O = cholesterol + D-glucose</text>
        <dbReference type="Rhea" id="RHEA:11956"/>
        <dbReference type="ChEBI" id="CHEBI:4167"/>
        <dbReference type="ChEBI" id="CHEBI:15377"/>
        <dbReference type="ChEBI" id="CHEBI:16113"/>
        <dbReference type="ChEBI" id="CHEBI:17495"/>
    </reaction>
    <physiologicalReaction direction="left-to-right" evidence="2">
        <dbReference type="Rhea" id="RHEA:11957"/>
    </physiologicalReaction>
</comment>
<comment type="catalytic activity">
    <reaction evidence="2">
        <text>a beta-D-glucosyl-(1&lt;-&gt;1')-N-acylsphing-4-enine + cholesterol = cholesteryl 3-beta-D-glucoside + an N-acylsphing-4-enine</text>
        <dbReference type="Rhea" id="RHEA:58264"/>
        <dbReference type="ChEBI" id="CHEBI:16113"/>
        <dbReference type="ChEBI" id="CHEBI:17495"/>
        <dbReference type="ChEBI" id="CHEBI:22801"/>
        <dbReference type="ChEBI" id="CHEBI:52639"/>
    </reaction>
    <physiologicalReaction direction="left-to-right" evidence="2">
        <dbReference type="Rhea" id="RHEA:58265"/>
    </physiologicalReaction>
    <physiologicalReaction direction="right-to-left" evidence="2">
        <dbReference type="Rhea" id="RHEA:58266"/>
    </physiologicalReaction>
</comment>
<comment type="catalytic activity">
    <reaction evidence="2">
        <text>beta-D-glucosyl-N-(9Z-octadecenoyl)-sphing-4E-enine + cholesterol = N-(9Z-octadecenoyl)-sphing-4-enine + cholesteryl 3-beta-D-glucoside</text>
        <dbReference type="Rhea" id="RHEA:58324"/>
        <dbReference type="ChEBI" id="CHEBI:16113"/>
        <dbReference type="ChEBI" id="CHEBI:17495"/>
        <dbReference type="ChEBI" id="CHEBI:77996"/>
        <dbReference type="ChEBI" id="CHEBI:139140"/>
    </reaction>
    <physiologicalReaction direction="left-to-right" evidence="2">
        <dbReference type="Rhea" id="RHEA:58325"/>
    </physiologicalReaction>
    <physiologicalReaction direction="right-to-left" evidence="2">
        <dbReference type="Rhea" id="RHEA:58326"/>
    </physiologicalReaction>
</comment>
<comment type="catalytic activity">
    <reaction evidence="2">
        <text>beta-D-glucosyl-N-octanoylsphing-4E-enine + cholesterol = N-octanoylsphing-4-enine + cholesteryl 3-beta-D-glucoside</text>
        <dbReference type="Rhea" id="RHEA:70303"/>
        <dbReference type="ChEBI" id="CHEBI:16113"/>
        <dbReference type="ChEBI" id="CHEBI:17495"/>
        <dbReference type="ChEBI" id="CHEBI:45815"/>
        <dbReference type="ChEBI" id="CHEBI:65222"/>
    </reaction>
    <physiologicalReaction direction="left-to-right" evidence="2">
        <dbReference type="Rhea" id="RHEA:70304"/>
    </physiologicalReaction>
    <physiologicalReaction direction="right-to-left" evidence="2">
        <dbReference type="Rhea" id="RHEA:70305"/>
    </physiologicalReaction>
</comment>
<comment type="catalytic activity">
    <reaction evidence="2">
        <text>beta-D-glucosyl-N-dodecanoylsphing-4-enine + cholesterol = N-dodecanoylsphing-4-enine + cholesteryl 3-beta-D-glucoside</text>
        <dbReference type="Rhea" id="RHEA:70307"/>
        <dbReference type="ChEBI" id="CHEBI:16113"/>
        <dbReference type="ChEBI" id="CHEBI:17495"/>
        <dbReference type="ChEBI" id="CHEBI:72956"/>
        <dbReference type="ChEBI" id="CHEBI:76297"/>
    </reaction>
    <physiologicalReaction direction="left-to-right" evidence="2">
        <dbReference type="Rhea" id="RHEA:70308"/>
    </physiologicalReaction>
    <physiologicalReaction direction="right-to-left" evidence="2">
        <dbReference type="Rhea" id="RHEA:70309"/>
    </physiologicalReaction>
</comment>
<comment type="catalytic activity">
    <reaction evidence="2">
        <text>beta-D-glucosyl-(1&lt;-&gt;1)-N-octadecanoylsphing-4-enine + cholesterol = N-octadecanoylsphing-4-enine + cholesteryl 3-beta-D-glucoside</text>
        <dbReference type="Rhea" id="RHEA:70311"/>
        <dbReference type="ChEBI" id="CHEBI:16113"/>
        <dbReference type="ChEBI" id="CHEBI:17495"/>
        <dbReference type="ChEBI" id="CHEBI:72961"/>
        <dbReference type="ChEBI" id="CHEBI:84719"/>
    </reaction>
    <physiologicalReaction direction="left-to-right" evidence="2">
        <dbReference type="Rhea" id="RHEA:70312"/>
    </physiologicalReaction>
    <physiologicalReaction direction="right-to-left" evidence="2">
        <dbReference type="Rhea" id="RHEA:70313"/>
    </physiologicalReaction>
</comment>
<comment type="catalytic activity">
    <reaction evidence="2">
        <text>beta-D-glucosyl-(1&lt;-&gt;1')-N-(15Z-tetracosenoyl)-sphing-4-enine + cholesterol = N-(15Z-tetracosenoyl)-sphing-4-enine + cholesteryl 3-beta-D-glucoside</text>
        <dbReference type="Rhea" id="RHEA:70315"/>
        <dbReference type="ChEBI" id="CHEBI:16113"/>
        <dbReference type="ChEBI" id="CHEBI:17495"/>
        <dbReference type="ChEBI" id="CHEBI:74450"/>
        <dbReference type="ChEBI" id="CHEBI:76302"/>
    </reaction>
    <physiologicalReaction direction="left-to-right" evidence="2">
        <dbReference type="Rhea" id="RHEA:70316"/>
    </physiologicalReaction>
    <physiologicalReaction direction="right-to-left" evidence="2">
        <dbReference type="Rhea" id="RHEA:70317"/>
    </physiologicalReaction>
</comment>
<comment type="catalytic activity">
    <reaction evidence="2">
        <text>a beta-D-galactosyl-(1&lt;-&gt;1')-N-acylsphing-4-enine + cholesterol = cholesteryl 3-beta-D-galactoside + an N-acylsphing-4-enine</text>
        <dbReference type="Rhea" id="RHEA:70235"/>
        <dbReference type="ChEBI" id="CHEBI:16113"/>
        <dbReference type="ChEBI" id="CHEBI:18390"/>
        <dbReference type="ChEBI" id="CHEBI:52639"/>
        <dbReference type="ChEBI" id="CHEBI:189066"/>
    </reaction>
    <physiologicalReaction direction="left-to-right" evidence="2">
        <dbReference type="Rhea" id="RHEA:70236"/>
    </physiologicalReaction>
    <physiologicalReaction direction="right-to-left" evidence="2">
        <dbReference type="Rhea" id="RHEA:70237"/>
    </physiologicalReaction>
</comment>
<comment type="catalytic activity">
    <reaction evidence="2">
        <text>1-(beta-D-galactosyl)-N-dodecanoylsphing-4-enine + cholesterol = cholesteryl 3-beta-D-galactoside + N-dodecanoylsphing-4-enine</text>
        <dbReference type="Rhea" id="RHEA:70255"/>
        <dbReference type="ChEBI" id="CHEBI:16113"/>
        <dbReference type="ChEBI" id="CHEBI:72956"/>
        <dbReference type="ChEBI" id="CHEBI:73432"/>
        <dbReference type="ChEBI" id="CHEBI:189066"/>
    </reaction>
    <physiologicalReaction direction="left-to-right" evidence="2">
        <dbReference type="Rhea" id="RHEA:70256"/>
    </physiologicalReaction>
    <physiologicalReaction direction="right-to-left" evidence="2">
        <dbReference type="Rhea" id="RHEA:70257"/>
    </physiologicalReaction>
</comment>
<comment type="catalytic activity">
    <reaction evidence="2">
        <text>a beta-D-xylosyl-(1&lt;-&gt;1')-N-acylsphing-4-enine + cholesterol = cholesteryl 3-beta-D-xyloside + an N-acylsphing-4-enine</text>
        <dbReference type="Rhea" id="RHEA:70239"/>
        <dbReference type="ChEBI" id="CHEBI:16113"/>
        <dbReference type="ChEBI" id="CHEBI:52639"/>
        <dbReference type="ChEBI" id="CHEBI:189067"/>
        <dbReference type="ChEBI" id="CHEBI:189068"/>
    </reaction>
    <physiologicalReaction direction="left-to-right" evidence="2">
        <dbReference type="Rhea" id="RHEA:70240"/>
    </physiologicalReaction>
</comment>
<comment type="catalytic activity">
    <reaction evidence="2">
        <text>beta-D-xylosyl-(1&lt;-&gt;1')-N-(9Z-octadecenoyl)-sphing-4-enine + cholesterol = cholesteryl 3-beta-D-xyloside + N-(9Z-octadecenoyl)-sphing-4-enine</text>
        <dbReference type="Rhea" id="RHEA:70251"/>
        <dbReference type="ChEBI" id="CHEBI:16113"/>
        <dbReference type="ChEBI" id="CHEBI:77996"/>
        <dbReference type="ChEBI" id="CHEBI:189067"/>
        <dbReference type="ChEBI" id="CHEBI:189081"/>
    </reaction>
    <physiologicalReaction direction="left-to-right" evidence="2">
        <dbReference type="Rhea" id="RHEA:70252"/>
    </physiologicalReaction>
</comment>
<comment type="pathway">
    <text evidence="2">Steroid metabolism; cholesterol metabolism.</text>
</comment>
<comment type="pathway">
    <text evidence="2">Sphingolipid metabolism.</text>
</comment>
<comment type="subunit">
    <text evidence="2">Interacts with saposin-C. Interacts with SCARB2. Interacts with TCP1. Interacts with GRN; this interaction prevents aggregation of GBA1-SCARB2 complex via interaction with HSPA1A upon stress (By similarity).</text>
</comment>
<comment type="subcellular location">
    <subcellularLocation>
        <location evidence="2">Lysosome membrane</location>
        <topology evidence="2">Peripheral membrane protein</topology>
        <orientation evidence="2">Lumenal side</orientation>
    </subcellularLocation>
    <text evidence="2">Interaction with saposin-C promotes membrane association. Targeting to lysosomes occurs through an alternative MPR-independent mechanism via SCARB2.</text>
</comment>
<comment type="similarity">
    <text evidence="4">Belongs to the glycosyl hydrolase 30 family.</text>
</comment>
<sequence>MEFSSPSREECPKPSGRVNIMAGSLTGLLLLQAVSWASGARPCIPKSFGYSSVVCVCNATYCDSLDPLTFPALGTFSRYESTRSGRRMELSTGTIQANHTGTGLLLTLQPEQKFQKVKGFGGAMTDAAALNILALSPPAQNLLLKSYFSEEGIGYNIIRVPMASCDFSIRTYTYADTPDDFQLHNFSLPEEDTKLKIPLIHRALQLARRPVSLLASPWTSPTWLKTNGAVNGKGSLKGQPGDIYHQTWARYFVKFLDAYAEHKLQFWAVTAENEPSAGLLSGYPFQCLGFTPEHQRDFIARDLGPTLANSTHHNVRLLMLDDQRLLLPHWAKVVLTDPEAAKYVHGIAVHWYLDFLAPAKATLGETHHLFPNTMLFASEACVGSKFWEQSVRLGSWDRGMQYSHSIITNLLYHVVGWTDWNLALNPEGGPNWVRNFVDSPIIVDITKDTFYKQPMFYHLGHFSKFIPEGSQRVGLVASQKNDLDTVALMHPDGSAVVVVLNRSSKDVPLTIKDPAVGFLETISPGYSIHTYLWRRQ</sequence>